<organism>
    <name type="scientific">Neisseria gonorrhoeae (strain ATCC 700825 / FA 1090)</name>
    <dbReference type="NCBI Taxonomy" id="242231"/>
    <lineage>
        <taxon>Bacteria</taxon>
        <taxon>Pseudomonadati</taxon>
        <taxon>Pseudomonadota</taxon>
        <taxon>Betaproteobacteria</taxon>
        <taxon>Neisseriales</taxon>
        <taxon>Neisseriaceae</taxon>
        <taxon>Neisseria</taxon>
    </lineage>
</organism>
<reference key="1">
    <citation type="submission" date="2003-03" db="EMBL/GenBank/DDBJ databases">
        <title>The complete genome sequence of Neisseria gonorrhoeae.</title>
        <authorList>
            <person name="Lewis L.A."/>
            <person name="Gillaspy A.F."/>
            <person name="McLaughlin R.E."/>
            <person name="Gipson M."/>
            <person name="Ducey T.F."/>
            <person name="Ownbey T."/>
            <person name="Hartman K."/>
            <person name="Nydick C."/>
            <person name="Carson M.B."/>
            <person name="Vaughn J."/>
            <person name="Thomson C."/>
            <person name="Song L."/>
            <person name="Lin S."/>
            <person name="Yuan X."/>
            <person name="Najar F."/>
            <person name="Zhan M."/>
            <person name="Ren Q."/>
            <person name="Zhu H."/>
            <person name="Qi S."/>
            <person name="Kenton S.M."/>
            <person name="Lai H."/>
            <person name="White J.D."/>
            <person name="Clifton S."/>
            <person name="Roe B.A."/>
            <person name="Dyer D.W."/>
        </authorList>
    </citation>
    <scope>NUCLEOTIDE SEQUENCE [LARGE SCALE GENOMIC DNA]</scope>
    <source>
        <strain>ATCC 700825 / FA 1090</strain>
    </source>
</reference>
<comment type="function">
    <text evidence="1">Binds the lower part of the 30S subunit head. Binds mRNA in the 70S ribosome, positioning it for translation.</text>
</comment>
<comment type="subunit">
    <text evidence="1">Part of the 30S ribosomal subunit. Forms a tight complex with proteins S10 and S14.</text>
</comment>
<comment type="similarity">
    <text evidence="1">Belongs to the universal ribosomal protein uS3 family.</text>
</comment>
<name>RS3_NEIG1</name>
<evidence type="ECO:0000255" key="1">
    <source>
        <dbReference type="HAMAP-Rule" id="MF_01309"/>
    </source>
</evidence>
<evidence type="ECO:0000256" key="2">
    <source>
        <dbReference type="SAM" id="MobiDB-lite"/>
    </source>
</evidence>
<evidence type="ECO:0000305" key="3"/>
<accession>Q5F5T3</accession>
<protein>
    <recommendedName>
        <fullName evidence="1">Small ribosomal subunit protein uS3</fullName>
    </recommendedName>
    <alternativeName>
        <fullName evidence="3">30S ribosomal protein S3</fullName>
    </alternativeName>
</protein>
<feature type="chain" id="PRO_0000230706" description="Small ribosomal subunit protein uS3">
    <location>
        <begin position="1"/>
        <end position="230"/>
    </location>
</feature>
<feature type="domain" description="KH type-2" evidence="1">
    <location>
        <begin position="39"/>
        <end position="107"/>
    </location>
</feature>
<feature type="region of interest" description="Disordered" evidence="2">
    <location>
        <begin position="210"/>
        <end position="230"/>
    </location>
</feature>
<proteinExistence type="inferred from homology"/>
<sequence length="230" mass="25826">MGQKINPTGFRLAVTKDWASKWFAKSTDFSTVLKQDIDVRNYLRQKLANASVGRVIIERPAKSARITIHSARPGVVIGKKGEDIEVLKRDLQVLMGVPIHVNIEEIRRPELDAQIIADGIAQQLEKRVQFRRAMKRAMQNAMRSGAKGIKIMTSGRLNGADIARSEWYREGRVPLHTLRANVDYATSEAHTTYGVLGLKVWVYTEGNIKSSKPEHESKQRKAGRRNAAAN</sequence>
<keyword id="KW-1185">Reference proteome</keyword>
<keyword id="KW-0687">Ribonucleoprotein</keyword>
<keyword id="KW-0689">Ribosomal protein</keyword>
<keyword id="KW-0694">RNA-binding</keyword>
<keyword id="KW-0699">rRNA-binding</keyword>
<dbReference type="EMBL" id="AE004969">
    <property type="protein sequence ID" value="AAW90454.1"/>
    <property type="molecule type" value="Genomic_DNA"/>
</dbReference>
<dbReference type="RefSeq" id="WP_003690079.1">
    <property type="nucleotide sequence ID" value="NC_002946.2"/>
</dbReference>
<dbReference type="RefSeq" id="YP_208866.1">
    <property type="nucleotide sequence ID" value="NC_002946.2"/>
</dbReference>
<dbReference type="SMR" id="Q5F5T3"/>
<dbReference type="STRING" id="242231.NGO_1832"/>
<dbReference type="GeneID" id="66754301"/>
<dbReference type="KEGG" id="ngo:NGO_1832"/>
<dbReference type="PATRIC" id="fig|242231.10.peg.2203"/>
<dbReference type="HOGENOM" id="CLU_058591_0_2_4"/>
<dbReference type="Proteomes" id="UP000000535">
    <property type="component" value="Chromosome"/>
</dbReference>
<dbReference type="GO" id="GO:0022627">
    <property type="term" value="C:cytosolic small ribosomal subunit"/>
    <property type="evidence" value="ECO:0007669"/>
    <property type="project" value="TreeGrafter"/>
</dbReference>
<dbReference type="GO" id="GO:0003729">
    <property type="term" value="F:mRNA binding"/>
    <property type="evidence" value="ECO:0007669"/>
    <property type="project" value="UniProtKB-UniRule"/>
</dbReference>
<dbReference type="GO" id="GO:0019843">
    <property type="term" value="F:rRNA binding"/>
    <property type="evidence" value="ECO:0007669"/>
    <property type="project" value="UniProtKB-UniRule"/>
</dbReference>
<dbReference type="GO" id="GO:0003735">
    <property type="term" value="F:structural constituent of ribosome"/>
    <property type="evidence" value="ECO:0007669"/>
    <property type="project" value="InterPro"/>
</dbReference>
<dbReference type="GO" id="GO:0006412">
    <property type="term" value="P:translation"/>
    <property type="evidence" value="ECO:0007669"/>
    <property type="project" value="UniProtKB-UniRule"/>
</dbReference>
<dbReference type="CDD" id="cd02412">
    <property type="entry name" value="KH-II_30S_S3"/>
    <property type="match status" value="1"/>
</dbReference>
<dbReference type="FunFam" id="3.30.1140.32:FF:000006">
    <property type="entry name" value="30S ribosomal protein S3"/>
    <property type="match status" value="1"/>
</dbReference>
<dbReference type="FunFam" id="3.30.300.20:FF:000001">
    <property type="entry name" value="30S ribosomal protein S3"/>
    <property type="match status" value="1"/>
</dbReference>
<dbReference type="Gene3D" id="3.30.300.20">
    <property type="match status" value="1"/>
</dbReference>
<dbReference type="Gene3D" id="3.30.1140.32">
    <property type="entry name" value="Ribosomal protein S3, C-terminal domain"/>
    <property type="match status" value="1"/>
</dbReference>
<dbReference type="HAMAP" id="MF_01309_B">
    <property type="entry name" value="Ribosomal_uS3_B"/>
    <property type="match status" value="1"/>
</dbReference>
<dbReference type="InterPro" id="IPR004087">
    <property type="entry name" value="KH_dom"/>
</dbReference>
<dbReference type="InterPro" id="IPR015946">
    <property type="entry name" value="KH_dom-like_a/b"/>
</dbReference>
<dbReference type="InterPro" id="IPR004044">
    <property type="entry name" value="KH_dom_type_2"/>
</dbReference>
<dbReference type="InterPro" id="IPR009019">
    <property type="entry name" value="KH_sf_prok-type"/>
</dbReference>
<dbReference type="InterPro" id="IPR036419">
    <property type="entry name" value="Ribosomal_S3_C_sf"/>
</dbReference>
<dbReference type="InterPro" id="IPR005704">
    <property type="entry name" value="Ribosomal_uS3_bac-typ"/>
</dbReference>
<dbReference type="InterPro" id="IPR001351">
    <property type="entry name" value="Ribosomal_uS3_C"/>
</dbReference>
<dbReference type="InterPro" id="IPR018280">
    <property type="entry name" value="Ribosomal_uS3_CS"/>
</dbReference>
<dbReference type="NCBIfam" id="TIGR01009">
    <property type="entry name" value="rpsC_bact"/>
    <property type="match status" value="1"/>
</dbReference>
<dbReference type="PANTHER" id="PTHR11760">
    <property type="entry name" value="30S/40S RIBOSOMAL PROTEIN S3"/>
    <property type="match status" value="1"/>
</dbReference>
<dbReference type="PANTHER" id="PTHR11760:SF19">
    <property type="entry name" value="SMALL RIBOSOMAL SUBUNIT PROTEIN US3C"/>
    <property type="match status" value="1"/>
</dbReference>
<dbReference type="Pfam" id="PF07650">
    <property type="entry name" value="KH_2"/>
    <property type="match status" value="1"/>
</dbReference>
<dbReference type="Pfam" id="PF00189">
    <property type="entry name" value="Ribosomal_S3_C"/>
    <property type="match status" value="1"/>
</dbReference>
<dbReference type="SMART" id="SM00322">
    <property type="entry name" value="KH"/>
    <property type="match status" value="1"/>
</dbReference>
<dbReference type="SUPFAM" id="SSF54814">
    <property type="entry name" value="Prokaryotic type KH domain (KH-domain type II)"/>
    <property type="match status" value="1"/>
</dbReference>
<dbReference type="SUPFAM" id="SSF54821">
    <property type="entry name" value="Ribosomal protein S3 C-terminal domain"/>
    <property type="match status" value="1"/>
</dbReference>
<dbReference type="PROSITE" id="PS50823">
    <property type="entry name" value="KH_TYPE_2"/>
    <property type="match status" value="1"/>
</dbReference>
<dbReference type="PROSITE" id="PS00548">
    <property type="entry name" value="RIBOSOMAL_S3"/>
    <property type="match status" value="1"/>
</dbReference>
<gene>
    <name evidence="1" type="primary">rpsC</name>
    <name type="ordered locus">NGO_1832</name>
</gene>